<organism>
    <name type="scientific">Limosilactobacillus fermentum (strain NBRC 3956 / LMG 18251)</name>
    <name type="common">Lactobacillus fermentum</name>
    <dbReference type="NCBI Taxonomy" id="334390"/>
    <lineage>
        <taxon>Bacteria</taxon>
        <taxon>Bacillati</taxon>
        <taxon>Bacillota</taxon>
        <taxon>Bacilli</taxon>
        <taxon>Lactobacillales</taxon>
        <taxon>Lactobacillaceae</taxon>
        <taxon>Limosilactobacillus</taxon>
    </lineage>
</organism>
<dbReference type="EC" id="4.3.2.10" evidence="1"/>
<dbReference type="EMBL" id="AP008937">
    <property type="protein sequence ID" value="BAG27097.1"/>
    <property type="molecule type" value="Genomic_DNA"/>
</dbReference>
<dbReference type="RefSeq" id="WP_012391118.1">
    <property type="nucleotide sequence ID" value="NC_010610.1"/>
</dbReference>
<dbReference type="SMR" id="B2GBR5"/>
<dbReference type="KEGG" id="lfe:LAF_0761"/>
<dbReference type="eggNOG" id="COG0107">
    <property type="taxonomic scope" value="Bacteria"/>
</dbReference>
<dbReference type="HOGENOM" id="CLU_048577_4_0_9"/>
<dbReference type="UniPathway" id="UPA00031">
    <property type="reaction ID" value="UER00010"/>
</dbReference>
<dbReference type="Proteomes" id="UP000001697">
    <property type="component" value="Chromosome"/>
</dbReference>
<dbReference type="GO" id="GO:0005737">
    <property type="term" value="C:cytoplasm"/>
    <property type="evidence" value="ECO:0007669"/>
    <property type="project" value="UniProtKB-SubCell"/>
</dbReference>
<dbReference type="GO" id="GO:0000107">
    <property type="term" value="F:imidazoleglycerol-phosphate synthase activity"/>
    <property type="evidence" value="ECO:0007669"/>
    <property type="project" value="UniProtKB-UniRule"/>
</dbReference>
<dbReference type="GO" id="GO:0016829">
    <property type="term" value="F:lyase activity"/>
    <property type="evidence" value="ECO:0007669"/>
    <property type="project" value="UniProtKB-KW"/>
</dbReference>
<dbReference type="GO" id="GO:0000105">
    <property type="term" value="P:L-histidine biosynthetic process"/>
    <property type="evidence" value="ECO:0007669"/>
    <property type="project" value="UniProtKB-UniRule"/>
</dbReference>
<dbReference type="CDD" id="cd04731">
    <property type="entry name" value="HisF"/>
    <property type="match status" value="1"/>
</dbReference>
<dbReference type="FunFam" id="3.20.20.70:FF:000006">
    <property type="entry name" value="Imidazole glycerol phosphate synthase subunit HisF"/>
    <property type="match status" value="1"/>
</dbReference>
<dbReference type="Gene3D" id="3.20.20.70">
    <property type="entry name" value="Aldolase class I"/>
    <property type="match status" value="1"/>
</dbReference>
<dbReference type="HAMAP" id="MF_01013">
    <property type="entry name" value="HisF"/>
    <property type="match status" value="1"/>
</dbReference>
<dbReference type="InterPro" id="IPR013785">
    <property type="entry name" value="Aldolase_TIM"/>
</dbReference>
<dbReference type="InterPro" id="IPR006062">
    <property type="entry name" value="His_biosynth"/>
</dbReference>
<dbReference type="InterPro" id="IPR004651">
    <property type="entry name" value="HisF"/>
</dbReference>
<dbReference type="InterPro" id="IPR050064">
    <property type="entry name" value="IGPS_HisA/HisF"/>
</dbReference>
<dbReference type="InterPro" id="IPR011060">
    <property type="entry name" value="RibuloseP-bd_barrel"/>
</dbReference>
<dbReference type="NCBIfam" id="TIGR00735">
    <property type="entry name" value="hisF"/>
    <property type="match status" value="1"/>
</dbReference>
<dbReference type="PANTHER" id="PTHR21235:SF2">
    <property type="entry name" value="IMIDAZOLE GLYCEROL PHOSPHATE SYNTHASE HISHF"/>
    <property type="match status" value="1"/>
</dbReference>
<dbReference type="PANTHER" id="PTHR21235">
    <property type="entry name" value="IMIDAZOLE GLYCEROL PHOSPHATE SYNTHASE SUBUNIT HISF/H IGP SYNTHASE SUBUNIT HISF/H"/>
    <property type="match status" value="1"/>
</dbReference>
<dbReference type="Pfam" id="PF00977">
    <property type="entry name" value="His_biosynth"/>
    <property type="match status" value="1"/>
</dbReference>
<dbReference type="SUPFAM" id="SSF51366">
    <property type="entry name" value="Ribulose-phoshate binding barrel"/>
    <property type="match status" value="1"/>
</dbReference>
<feature type="chain" id="PRO_1000135013" description="Imidazole glycerol phosphate synthase subunit HisF">
    <location>
        <begin position="1"/>
        <end position="261"/>
    </location>
</feature>
<feature type="active site" evidence="1">
    <location>
        <position position="11"/>
    </location>
</feature>
<feature type="active site" evidence="1">
    <location>
        <position position="130"/>
    </location>
</feature>
<protein>
    <recommendedName>
        <fullName evidence="1">Imidazole glycerol phosphate synthase subunit HisF</fullName>
        <ecNumber evidence="1">4.3.2.10</ecNumber>
    </recommendedName>
    <alternativeName>
        <fullName evidence="1">IGP synthase cyclase subunit</fullName>
    </alternativeName>
    <alternativeName>
        <fullName evidence="1">IGP synthase subunit HisF</fullName>
    </alternativeName>
    <alternativeName>
        <fullName evidence="1">ImGP synthase subunit HisF</fullName>
        <shortName evidence="1">IGPS subunit HisF</shortName>
    </alternativeName>
</protein>
<keyword id="KW-0028">Amino-acid biosynthesis</keyword>
<keyword id="KW-0963">Cytoplasm</keyword>
<keyword id="KW-0368">Histidine biosynthesis</keyword>
<keyword id="KW-0456">Lyase</keyword>
<keyword id="KW-1185">Reference proteome</keyword>
<evidence type="ECO:0000255" key="1">
    <source>
        <dbReference type="HAMAP-Rule" id="MF_01013"/>
    </source>
</evidence>
<proteinExistence type="inferred from homology"/>
<reference key="1">
    <citation type="journal article" date="2008" name="DNA Res.">
        <title>Comparative genome analysis of Lactobacillus reuteri and Lactobacillus fermentum reveal a genomic island for reuterin and cobalamin production.</title>
        <authorList>
            <person name="Morita H."/>
            <person name="Toh H."/>
            <person name="Fukuda S."/>
            <person name="Horikawa H."/>
            <person name="Oshima K."/>
            <person name="Suzuki T."/>
            <person name="Murakami M."/>
            <person name="Hisamatsu S."/>
            <person name="Kato Y."/>
            <person name="Takizawa T."/>
            <person name="Fukuoka H."/>
            <person name="Yoshimura T."/>
            <person name="Itoh K."/>
            <person name="O'Sullivan D.J."/>
            <person name="McKay L.L."/>
            <person name="Ohno H."/>
            <person name="Kikuchi J."/>
            <person name="Masaoka T."/>
            <person name="Hattori M."/>
        </authorList>
    </citation>
    <scope>NUCLEOTIDE SEQUENCE [LARGE SCALE GENOMIC DNA]</scope>
    <source>
        <strain>NBRC 3956 / LMG 18251</strain>
    </source>
</reference>
<gene>
    <name evidence="1" type="primary">hisF</name>
    <name type="ordered locus">LAF_0761</name>
</gene>
<name>HIS6_LIMF3</name>
<comment type="function">
    <text evidence="1">IGPS catalyzes the conversion of PRFAR and glutamine to IGP, AICAR and glutamate. The HisF subunit catalyzes the cyclization activity that produces IGP and AICAR from PRFAR using the ammonia provided by the HisH subunit.</text>
</comment>
<comment type="catalytic activity">
    <reaction evidence="1">
        <text>5-[(5-phospho-1-deoxy-D-ribulos-1-ylimino)methylamino]-1-(5-phospho-beta-D-ribosyl)imidazole-4-carboxamide + L-glutamine = D-erythro-1-(imidazol-4-yl)glycerol 3-phosphate + 5-amino-1-(5-phospho-beta-D-ribosyl)imidazole-4-carboxamide + L-glutamate + H(+)</text>
        <dbReference type="Rhea" id="RHEA:24793"/>
        <dbReference type="ChEBI" id="CHEBI:15378"/>
        <dbReference type="ChEBI" id="CHEBI:29985"/>
        <dbReference type="ChEBI" id="CHEBI:58278"/>
        <dbReference type="ChEBI" id="CHEBI:58359"/>
        <dbReference type="ChEBI" id="CHEBI:58475"/>
        <dbReference type="ChEBI" id="CHEBI:58525"/>
        <dbReference type="EC" id="4.3.2.10"/>
    </reaction>
</comment>
<comment type="pathway">
    <text evidence="1">Amino-acid biosynthesis; L-histidine biosynthesis; L-histidine from 5-phospho-alpha-D-ribose 1-diphosphate: step 5/9.</text>
</comment>
<comment type="subunit">
    <text evidence="1">Heterodimer of HisH and HisF.</text>
</comment>
<comment type="subcellular location">
    <subcellularLocation>
        <location evidence="1">Cytoplasm</location>
    </subcellularLocation>
</comment>
<comment type="similarity">
    <text evidence="1">Belongs to the HisA/HisF family.</text>
</comment>
<sequence>MLTKRIIPCLDVTDGRVKKGVNFVNLVDVGDPVAIARRYQEQGADELVFLDITATNQGRQATVDMVAAVSRQVFMPLTVGGGIRSVEDMRALLLAGADKVSLNSSAVADPDLISAGARLFGNQCFVTAIDVKTDPATGQKMVYTHGGTKPTGLEALAWAKQVVSLGSGELLVTSMDKDGTQDGYDTAFYKELTAAVDVPVIASGGAGKIDDFADVFLNSGVTGALAASVFHFQQLTIAQVKEDLIKKGVPVRWNQTLQRGS</sequence>
<accession>B2GBR5</accession>